<proteinExistence type="inferred from homology"/>
<name>MNME_CLOTE</name>
<accession>Q899S2</accession>
<organism>
    <name type="scientific">Clostridium tetani (strain Massachusetts / E88)</name>
    <dbReference type="NCBI Taxonomy" id="212717"/>
    <lineage>
        <taxon>Bacteria</taxon>
        <taxon>Bacillati</taxon>
        <taxon>Bacillota</taxon>
        <taxon>Clostridia</taxon>
        <taxon>Eubacteriales</taxon>
        <taxon>Clostridiaceae</taxon>
        <taxon>Clostridium</taxon>
    </lineage>
</organism>
<gene>
    <name evidence="1" type="primary">mnmE</name>
    <name evidence="1" type="synonym">thdF</name>
    <name evidence="1" type="synonym">trmE</name>
    <name type="ordered locus">CTC_00098</name>
</gene>
<keyword id="KW-0963">Cytoplasm</keyword>
<keyword id="KW-0342">GTP-binding</keyword>
<keyword id="KW-0378">Hydrolase</keyword>
<keyword id="KW-0460">Magnesium</keyword>
<keyword id="KW-0479">Metal-binding</keyword>
<keyword id="KW-0547">Nucleotide-binding</keyword>
<keyword id="KW-0630">Potassium</keyword>
<keyword id="KW-1185">Reference proteome</keyword>
<keyword id="KW-0819">tRNA processing</keyword>
<sequence length="459" mass="51284">MKDFDTIAAISTVLGEGGISIIRISGDKSLAIVNKLFKAKNGKDILDMKPYTMKYGHIIEQDTKNILDEVLISYMKAPRSFTAEDTVEINCHGGVTPTKKIFQEVIKAGVRVAEPGEFTKRAFLNGRIDLTQAEAVIDIIRSKTELSMKSAVSQSIGKVSEEINVLRENLIETIAHIEATVDYPEEDLEEITSSQVQEKIEKIIEELERLLDTSEEGKIIREGLDVVIVGKPNVGKSSLLNALLSEKRAIVTEIPGTTRDVIEEYINLDGIPIKIIDTAGIRETEDLVEKIGVERSKEKINEADLVILVLDSSNKLNDEDYEIIEYIKDKKYITLLNKSDLESKINKSDLEDLKLYNIIEISAKMGFGLEDLKEYIKDLFFKGDIQTDSIIITNTRHKEALIRAKESCNTALKALENTLAIDLASIDIKNAWLSLGEITGDTLEEDIIDKIFSEFCLGK</sequence>
<dbReference type="EC" id="3.6.-.-" evidence="1"/>
<dbReference type="EMBL" id="AE015927">
    <property type="protein sequence ID" value="AAO34750.1"/>
    <property type="molecule type" value="Genomic_DNA"/>
</dbReference>
<dbReference type="RefSeq" id="WP_011098422.1">
    <property type="nucleotide sequence ID" value="NC_004557.1"/>
</dbReference>
<dbReference type="SMR" id="Q899S2"/>
<dbReference type="STRING" id="212717.CTC_00098"/>
<dbReference type="GeneID" id="24252889"/>
<dbReference type="KEGG" id="ctc:CTC_00098"/>
<dbReference type="HOGENOM" id="CLU_019624_4_1_9"/>
<dbReference type="OrthoDB" id="9805918at2"/>
<dbReference type="Proteomes" id="UP000001412">
    <property type="component" value="Chromosome"/>
</dbReference>
<dbReference type="GO" id="GO:0005829">
    <property type="term" value="C:cytosol"/>
    <property type="evidence" value="ECO:0007669"/>
    <property type="project" value="TreeGrafter"/>
</dbReference>
<dbReference type="GO" id="GO:0005525">
    <property type="term" value="F:GTP binding"/>
    <property type="evidence" value="ECO:0007669"/>
    <property type="project" value="UniProtKB-UniRule"/>
</dbReference>
<dbReference type="GO" id="GO:0003924">
    <property type="term" value="F:GTPase activity"/>
    <property type="evidence" value="ECO:0007669"/>
    <property type="project" value="UniProtKB-UniRule"/>
</dbReference>
<dbReference type="GO" id="GO:0046872">
    <property type="term" value="F:metal ion binding"/>
    <property type="evidence" value="ECO:0007669"/>
    <property type="project" value="UniProtKB-KW"/>
</dbReference>
<dbReference type="GO" id="GO:0030488">
    <property type="term" value="P:tRNA methylation"/>
    <property type="evidence" value="ECO:0007669"/>
    <property type="project" value="TreeGrafter"/>
</dbReference>
<dbReference type="GO" id="GO:0002098">
    <property type="term" value="P:tRNA wobble uridine modification"/>
    <property type="evidence" value="ECO:0007669"/>
    <property type="project" value="TreeGrafter"/>
</dbReference>
<dbReference type="CDD" id="cd04164">
    <property type="entry name" value="trmE"/>
    <property type="match status" value="1"/>
</dbReference>
<dbReference type="CDD" id="cd14858">
    <property type="entry name" value="TrmE_N"/>
    <property type="match status" value="1"/>
</dbReference>
<dbReference type="FunFam" id="3.30.1360.120:FF:000003">
    <property type="entry name" value="tRNA modification GTPase MnmE"/>
    <property type="match status" value="1"/>
</dbReference>
<dbReference type="FunFam" id="3.40.50.300:FF:000494">
    <property type="entry name" value="tRNA modification GTPase MnmE"/>
    <property type="match status" value="1"/>
</dbReference>
<dbReference type="Gene3D" id="3.40.50.300">
    <property type="entry name" value="P-loop containing nucleotide triphosphate hydrolases"/>
    <property type="match status" value="1"/>
</dbReference>
<dbReference type="Gene3D" id="3.30.1360.120">
    <property type="entry name" value="Probable tRNA modification gtpase trme, domain 1"/>
    <property type="match status" value="1"/>
</dbReference>
<dbReference type="Gene3D" id="1.20.120.430">
    <property type="entry name" value="tRNA modification GTPase MnmE domain 2"/>
    <property type="match status" value="1"/>
</dbReference>
<dbReference type="HAMAP" id="MF_00379">
    <property type="entry name" value="GTPase_MnmE"/>
    <property type="match status" value="1"/>
</dbReference>
<dbReference type="InterPro" id="IPR031168">
    <property type="entry name" value="G_TrmE"/>
</dbReference>
<dbReference type="InterPro" id="IPR006073">
    <property type="entry name" value="GTP-bd"/>
</dbReference>
<dbReference type="InterPro" id="IPR018948">
    <property type="entry name" value="GTP-bd_TrmE_N"/>
</dbReference>
<dbReference type="InterPro" id="IPR004520">
    <property type="entry name" value="GTPase_MnmE"/>
</dbReference>
<dbReference type="InterPro" id="IPR027368">
    <property type="entry name" value="MnmE_dom2"/>
</dbReference>
<dbReference type="InterPro" id="IPR025867">
    <property type="entry name" value="MnmE_helical"/>
</dbReference>
<dbReference type="InterPro" id="IPR027417">
    <property type="entry name" value="P-loop_NTPase"/>
</dbReference>
<dbReference type="InterPro" id="IPR005225">
    <property type="entry name" value="Small_GTP-bd"/>
</dbReference>
<dbReference type="InterPro" id="IPR027266">
    <property type="entry name" value="TrmE/GcvT_dom1"/>
</dbReference>
<dbReference type="NCBIfam" id="TIGR00450">
    <property type="entry name" value="mnmE_trmE_thdF"/>
    <property type="match status" value="1"/>
</dbReference>
<dbReference type="NCBIfam" id="NF003661">
    <property type="entry name" value="PRK05291.1-3"/>
    <property type="match status" value="1"/>
</dbReference>
<dbReference type="NCBIfam" id="TIGR00231">
    <property type="entry name" value="small_GTP"/>
    <property type="match status" value="1"/>
</dbReference>
<dbReference type="PANTHER" id="PTHR42714">
    <property type="entry name" value="TRNA MODIFICATION GTPASE GTPBP3"/>
    <property type="match status" value="1"/>
</dbReference>
<dbReference type="PANTHER" id="PTHR42714:SF2">
    <property type="entry name" value="TRNA MODIFICATION GTPASE GTPBP3, MITOCHONDRIAL"/>
    <property type="match status" value="1"/>
</dbReference>
<dbReference type="Pfam" id="PF01926">
    <property type="entry name" value="MMR_HSR1"/>
    <property type="match status" value="1"/>
</dbReference>
<dbReference type="Pfam" id="PF12631">
    <property type="entry name" value="MnmE_helical"/>
    <property type="match status" value="1"/>
</dbReference>
<dbReference type="Pfam" id="PF10396">
    <property type="entry name" value="TrmE_N"/>
    <property type="match status" value="1"/>
</dbReference>
<dbReference type="PRINTS" id="PR00326">
    <property type="entry name" value="GTP1OBG"/>
</dbReference>
<dbReference type="SUPFAM" id="SSF52540">
    <property type="entry name" value="P-loop containing nucleoside triphosphate hydrolases"/>
    <property type="match status" value="1"/>
</dbReference>
<dbReference type="SUPFAM" id="SSF116878">
    <property type="entry name" value="TrmE connector domain"/>
    <property type="match status" value="1"/>
</dbReference>
<dbReference type="PROSITE" id="PS51709">
    <property type="entry name" value="G_TRME"/>
    <property type="match status" value="1"/>
</dbReference>
<evidence type="ECO:0000255" key="1">
    <source>
        <dbReference type="HAMAP-Rule" id="MF_00379"/>
    </source>
</evidence>
<protein>
    <recommendedName>
        <fullName evidence="1">tRNA modification GTPase MnmE</fullName>
        <ecNumber evidence="1">3.6.-.-</ecNumber>
    </recommendedName>
</protein>
<feature type="chain" id="PRO_0000188871" description="tRNA modification GTPase MnmE">
    <location>
        <begin position="1"/>
        <end position="459"/>
    </location>
</feature>
<feature type="domain" description="TrmE-type G">
    <location>
        <begin position="223"/>
        <end position="381"/>
    </location>
</feature>
<feature type="binding site" evidence="1">
    <location>
        <position position="23"/>
    </location>
    <ligand>
        <name>(6S)-5-formyl-5,6,7,8-tetrahydrofolate</name>
        <dbReference type="ChEBI" id="CHEBI:57457"/>
    </ligand>
</feature>
<feature type="binding site" evidence="1">
    <location>
        <position position="88"/>
    </location>
    <ligand>
        <name>(6S)-5-formyl-5,6,7,8-tetrahydrofolate</name>
        <dbReference type="ChEBI" id="CHEBI:57457"/>
    </ligand>
</feature>
<feature type="binding site" evidence="1">
    <location>
        <position position="127"/>
    </location>
    <ligand>
        <name>(6S)-5-formyl-5,6,7,8-tetrahydrofolate</name>
        <dbReference type="ChEBI" id="CHEBI:57457"/>
    </ligand>
</feature>
<feature type="binding site" evidence="1">
    <location>
        <begin position="233"/>
        <end position="238"/>
    </location>
    <ligand>
        <name>GTP</name>
        <dbReference type="ChEBI" id="CHEBI:37565"/>
    </ligand>
</feature>
<feature type="binding site" evidence="1">
    <location>
        <position position="233"/>
    </location>
    <ligand>
        <name>K(+)</name>
        <dbReference type="ChEBI" id="CHEBI:29103"/>
    </ligand>
</feature>
<feature type="binding site" evidence="1">
    <location>
        <position position="237"/>
    </location>
    <ligand>
        <name>Mg(2+)</name>
        <dbReference type="ChEBI" id="CHEBI:18420"/>
    </ligand>
</feature>
<feature type="binding site" evidence="1">
    <location>
        <begin position="252"/>
        <end position="258"/>
    </location>
    <ligand>
        <name>GTP</name>
        <dbReference type="ChEBI" id="CHEBI:37565"/>
    </ligand>
</feature>
<feature type="binding site" evidence="1">
    <location>
        <position position="252"/>
    </location>
    <ligand>
        <name>K(+)</name>
        <dbReference type="ChEBI" id="CHEBI:29103"/>
    </ligand>
</feature>
<feature type="binding site" evidence="1">
    <location>
        <position position="254"/>
    </location>
    <ligand>
        <name>K(+)</name>
        <dbReference type="ChEBI" id="CHEBI:29103"/>
    </ligand>
</feature>
<feature type="binding site" evidence="1">
    <location>
        <position position="257"/>
    </location>
    <ligand>
        <name>K(+)</name>
        <dbReference type="ChEBI" id="CHEBI:29103"/>
    </ligand>
</feature>
<feature type="binding site" evidence="1">
    <location>
        <position position="258"/>
    </location>
    <ligand>
        <name>Mg(2+)</name>
        <dbReference type="ChEBI" id="CHEBI:18420"/>
    </ligand>
</feature>
<feature type="binding site" evidence="1">
    <location>
        <begin position="277"/>
        <end position="280"/>
    </location>
    <ligand>
        <name>GTP</name>
        <dbReference type="ChEBI" id="CHEBI:37565"/>
    </ligand>
</feature>
<feature type="binding site" evidence="1">
    <location>
        <position position="459"/>
    </location>
    <ligand>
        <name>(6S)-5-formyl-5,6,7,8-tetrahydrofolate</name>
        <dbReference type="ChEBI" id="CHEBI:57457"/>
    </ligand>
</feature>
<comment type="function">
    <text evidence="1">Exhibits a very high intrinsic GTPase hydrolysis rate. Involved in the addition of a carboxymethylaminomethyl (cmnm) group at the wobble position (U34) of certain tRNAs, forming tRNA-cmnm(5)s(2)U34.</text>
</comment>
<comment type="cofactor">
    <cofactor evidence="1">
        <name>K(+)</name>
        <dbReference type="ChEBI" id="CHEBI:29103"/>
    </cofactor>
    <text evidence="1">Binds 1 potassium ion per subunit.</text>
</comment>
<comment type="subunit">
    <text evidence="1">Homodimer. Heterotetramer of two MnmE and two MnmG subunits.</text>
</comment>
<comment type="subcellular location">
    <subcellularLocation>
        <location evidence="1">Cytoplasm</location>
    </subcellularLocation>
</comment>
<comment type="similarity">
    <text evidence="1">Belongs to the TRAFAC class TrmE-Era-EngA-EngB-Septin-like GTPase superfamily. TrmE GTPase family.</text>
</comment>
<reference key="1">
    <citation type="journal article" date="2003" name="Proc. Natl. Acad. Sci. U.S.A.">
        <title>The genome sequence of Clostridium tetani, the causative agent of tetanus disease.</title>
        <authorList>
            <person name="Brueggemann H."/>
            <person name="Baeumer S."/>
            <person name="Fricke W.F."/>
            <person name="Wiezer A."/>
            <person name="Liesegang H."/>
            <person name="Decker I."/>
            <person name="Herzberg C."/>
            <person name="Martinez-Arias R."/>
            <person name="Merkl R."/>
            <person name="Henne A."/>
            <person name="Gottschalk G."/>
        </authorList>
    </citation>
    <scope>NUCLEOTIDE SEQUENCE [LARGE SCALE GENOMIC DNA]</scope>
    <source>
        <strain>Massachusetts / E88</strain>
    </source>
</reference>